<comment type="function">
    <text evidence="1">The branched-chain alpha-keto dehydrogenase complex catalyzes the overall conversion of alpha-keto acids to acyl-CoA and CO(2). It contains multiple copies of three enzymatic components: branched-chain alpha-keto acid decarboxylase (E1), lipoamide acyltransferase (E2) and lipoamide dehydrogenase (E3) (By similarity).</text>
</comment>
<comment type="catalytic activity">
    <reaction>
        <text>N(6)-[(R)-lipoyl]-L-lysyl-[protein] + 3-methyl-2-oxobutanoate + H(+) = N(6)-[(R)-S(8)-2-methylpropanoyldihydrolipoyl]-L-lysyl-[protein] + CO2</text>
        <dbReference type="Rhea" id="RHEA:13457"/>
        <dbReference type="Rhea" id="RHEA-COMP:10474"/>
        <dbReference type="Rhea" id="RHEA-COMP:10497"/>
        <dbReference type="ChEBI" id="CHEBI:11851"/>
        <dbReference type="ChEBI" id="CHEBI:15378"/>
        <dbReference type="ChEBI" id="CHEBI:16526"/>
        <dbReference type="ChEBI" id="CHEBI:83099"/>
        <dbReference type="ChEBI" id="CHEBI:83142"/>
        <dbReference type="EC" id="1.2.4.4"/>
    </reaction>
</comment>
<comment type="cofactor">
    <cofactor evidence="1">
        <name>thiamine diphosphate</name>
        <dbReference type="ChEBI" id="CHEBI:58937"/>
    </cofactor>
</comment>
<comment type="subunit">
    <text evidence="1">Heterodimer of an alpha and a beta chain.</text>
</comment>
<name>ODBB_PSEAE</name>
<accession>Q9I1M1</accession>
<reference key="1">
    <citation type="journal article" date="2000" name="Nature">
        <title>Complete genome sequence of Pseudomonas aeruginosa PAO1, an opportunistic pathogen.</title>
        <authorList>
            <person name="Stover C.K."/>
            <person name="Pham X.-Q.T."/>
            <person name="Erwin A.L."/>
            <person name="Mizoguchi S.D."/>
            <person name="Warrener P."/>
            <person name="Hickey M.J."/>
            <person name="Brinkman F.S.L."/>
            <person name="Hufnagle W.O."/>
            <person name="Kowalik D.J."/>
            <person name="Lagrou M."/>
            <person name="Garber R.L."/>
            <person name="Goltry L."/>
            <person name="Tolentino E."/>
            <person name="Westbrock-Wadman S."/>
            <person name="Yuan Y."/>
            <person name="Brody L.L."/>
            <person name="Coulter S.N."/>
            <person name="Folger K.R."/>
            <person name="Kas A."/>
            <person name="Larbig K."/>
            <person name="Lim R.M."/>
            <person name="Smith K.A."/>
            <person name="Spencer D.H."/>
            <person name="Wong G.K.-S."/>
            <person name="Wu Z."/>
            <person name="Paulsen I.T."/>
            <person name="Reizer J."/>
            <person name="Saier M.H. Jr."/>
            <person name="Hancock R.E.W."/>
            <person name="Lory S."/>
            <person name="Olson M.V."/>
        </authorList>
    </citation>
    <scope>NUCLEOTIDE SEQUENCE [LARGE SCALE GENOMIC DNA]</scope>
    <source>
        <strain>ATCC 15692 / DSM 22644 / CIP 104116 / JCM 14847 / LMG 12228 / 1C / PRS 101 / PAO1</strain>
    </source>
</reference>
<organism>
    <name type="scientific">Pseudomonas aeruginosa (strain ATCC 15692 / DSM 22644 / CIP 104116 / JCM 14847 / LMG 12228 / 1C / PRS 101 / PAO1)</name>
    <dbReference type="NCBI Taxonomy" id="208964"/>
    <lineage>
        <taxon>Bacteria</taxon>
        <taxon>Pseudomonadati</taxon>
        <taxon>Pseudomonadota</taxon>
        <taxon>Gammaproteobacteria</taxon>
        <taxon>Pseudomonadales</taxon>
        <taxon>Pseudomonadaceae</taxon>
        <taxon>Pseudomonas</taxon>
    </lineage>
</organism>
<sequence length="350" mass="38325">MNAMNPQHENAQTVTSMTMIQALRSAMDIMLERDDDVVVFGQDVGYFGGVFRCTEGLQKKYGTSRVFDAPISESGIIGAAVGMGAYGLRPVVEIQFADYVYPASDQLISEAARLRYRSAGDFIVPMTVRMPCGGGIYGGQTHSQSPEAMFTQVCGLRTVMPSNPYDAKGLLIACIENDDPVIFLEPKRLYNGPFDGHHDRPVTPWSKHPASQVPDGYYKVPLDKAAIVRPGAALTVLTYGTMVYVAQAAADETGLDAEIIDLRSLWPLDLETIVASVKKTGRCVIAHEATRTCGFGAELMSLVQEHCFHHLEAPIERVTGWDTPYPHAQEWAYFPGPARVGAAFKRVMEV</sequence>
<keyword id="KW-0560">Oxidoreductase</keyword>
<keyword id="KW-1185">Reference proteome</keyword>
<keyword id="KW-0786">Thiamine pyrophosphate</keyword>
<protein>
    <recommendedName>
        <fullName>2-oxoisovalerate dehydrogenase subunit beta</fullName>
        <ecNumber>1.2.4.4</ecNumber>
    </recommendedName>
    <alternativeName>
        <fullName>Branched-chain alpha-keto acid dehydrogenase E1 component beta chain</fullName>
        <shortName>BCKDH E1-beta</shortName>
    </alternativeName>
</protein>
<dbReference type="EC" id="1.2.4.4"/>
<dbReference type="EMBL" id="AE004091">
    <property type="protein sequence ID" value="AAG05636.1"/>
    <property type="molecule type" value="Genomic_DNA"/>
</dbReference>
<dbReference type="PIR" id="D83365">
    <property type="entry name" value="D83365"/>
</dbReference>
<dbReference type="PIR" id="S63478">
    <property type="entry name" value="S63478"/>
</dbReference>
<dbReference type="RefSeq" id="NP_250938.1">
    <property type="nucleotide sequence ID" value="NC_002516.2"/>
</dbReference>
<dbReference type="RefSeq" id="WP_003089248.1">
    <property type="nucleotide sequence ID" value="NZ_QZGE01000014.1"/>
</dbReference>
<dbReference type="SMR" id="Q9I1M1"/>
<dbReference type="STRING" id="208964.PA2248"/>
<dbReference type="PaxDb" id="208964-PA2248"/>
<dbReference type="GeneID" id="879226"/>
<dbReference type="KEGG" id="pae:PA2248"/>
<dbReference type="PATRIC" id="fig|208964.12.peg.2349"/>
<dbReference type="PseudoCAP" id="PA2248"/>
<dbReference type="HOGENOM" id="CLU_012907_1_0_6"/>
<dbReference type="InParanoid" id="Q9I1M1"/>
<dbReference type="OrthoDB" id="9780894at2"/>
<dbReference type="PhylomeDB" id="Q9I1M1"/>
<dbReference type="BioCyc" id="PAER208964:G1FZ6-2287-MONOMER"/>
<dbReference type="Proteomes" id="UP000002438">
    <property type="component" value="Chromosome"/>
</dbReference>
<dbReference type="GO" id="GO:0003863">
    <property type="term" value="F:3-methyl-2-oxobutanoate dehydrogenase (2-methylpropanoyl-transferring) activity"/>
    <property type="evidence" value="ECO:0007669"/>
    <property type="project" value="UniProtKB-EC"/>
</dbReference>
<dbReference type="GO" id="GO:0009083">
    <property type="term" value="P:branched-chain amino acid catabolic process"/>
    <property type="evidence" value="ECO:0000318"/>
    <property type="project" value="GO_Central"/>
</dbReference>
<dbReference type="GO" id="GO:0007584">
    <property type="term" value="P:response to nutrient"/>
    <property type="evidence" value="ECO:0000318"/>
    <property type="project" value="GO_Central"/>
</dbReference>
<dbReference type="CDD" id="cd07036">
    <property type="entry name" value="TPP_PYR_E1-PDHc-beta_like"/>
    <property type="match status" value="1"/>
</dbReference>
<dbReference type="FunFam" id="3.40.50.920:FF:000001">
    <property type="entry name" value="Pyruvate dehydrogenase E1 beta subunit"/>
    <property type="match status" value="1"/>
</dbReference>
<dbReference type="FunFam" id="3.40.50.970:FF:000001">
    <property type="entry name" value="Pyruvate dehydrogenase E1 beta subunit"/>
    <property type="match status" value="1"/>
</dbReference>
<dbReference type="Gene3D" id="3.40.50.920">
    <property type="match status" value="1"/>
</dbReference>
<dbReference type="Gene3D" id="3.40.50.970">
    <property type="match status" value="1"/>
</dbReference>
<dbReference type="InterPro" id="IPR029061">
    <property type="entry name" value="THDP-binding"/>
</dbReference>
<dbReference type="InterPro" id="IPR009014">
    <property type="entry name" value="Transketo_C/PFOR_II"/>
</dbReference>
<dbReference type="InterPro" id="IPR005475">
    <property type="entry name" value="Transketolase-like_Pyr-bd"/>
</dbReference>
<dbReference type="InterPro" id="IPR033248">
    <property type="entry name" value="Transketolase_C"/>
</dbReference>
<dbReference type="PANTHER" id="PTHR42980:SF1">
    <property type="entry name" value="2-OXOISOVALERATE DEHYDROGENASE SUBUNIT BETA, MITOCHONDRIAL"/>
    <property type="match status" value="1"/>
</dbReference>
<dbReference type="PANTHER" id="PTHR42980">
    <property type="entry name" value="2-OXOISOVALERATE DEHYDROGENASE SUBUNIT BETA-RELATED"/>
    <property type="match status" value="1"/>
</dbReference>
<dbReference type="Pfam" id="PF02779">
    <property type="entry name" value="Transket_pyr"/>
    <property type="match status" value="1"/>
</dbReference>
<dbReference type="Pfam" id="PF02780">
    <property type="entry name" value="Transketolase_C"/>
    <property type="match status" value="1"/>
</dbReference>
<dbReference type="SMART" id="SM00861">
    <property type="entry name" value="Transket_pyr"/>
    <property type="match status" value="1"/>
</dbReference>
<dbReference type="SUPFAM" id="SSF52518">
    <property type="entry name" value="Thiamin diphosphate-binding fold (THDP-binding)"/>
    <property type="match status" value="1"/>
</dbReference>
<dbReference type="SUPFAM" id="SSF52922">
    <property type="entry name" value="TK C-terminal domain-like"/>
    <property type="match status" value="1"/>
</dbReference>
<proteinExistence type="inferred from homology"/>
<feature type="chain" id="PRO_0000287783" description="2-oxoisovalerate dehydrogenase subunit beta">
    <location>
        <begin position="1"/>
        <end position="350"/>
    </location>
</feature>
<evidence type="ECO:0000250" key="1"/>
<gene>
    <name type="primary">bkdA2</name>
    <name type="ordered locus">PA2248</name>
</gene>